<accession>Q2M408</accession>
<proteinExistence type="evidence at transcript level"/>
<dbReference type="EMBL" id="AY961453">
    <property type="protein sequence ID" value="AAY43399.1"/>
    <property type="molecule type" value="mRNA"/>
</dbReference>
<dbReference type="VEuPathDB" id="FungiDB:PITG_12009"/>
<dbReference type="VEuPathDB" id="FungiDB:PITG_22988"/>
<dbReference type="GO" id="GO:0005576">
    <property type="term" value="C:extracellular region"/>
    <property type="evidence" value="ECO:0007669"/>
    <property type="project" value="UniProtKB-SubCell"/>
</dbReference>
<dbReference type="GO" id="GO:0042025">
    <property type="term" value="C:host cell nucleus"/>
    <property type="evidence" value="ECO:0007669"/>
    <property type="project" value="UniProtKB-SubCell"/>
</dbReference>
<dbReference type="InterPro" id="IPR045379">
    <property type="entry name" value="Crinkler_N"/>
</dbReference>
<dbReference type="Pfam" id="PF20147">
    <property type="entry name" value="Crinkler"/>
    <property type="match status" value="1"/>
</dbReference>
<feature type="signal peptide" evidence="1">
    <location>
        <begin position="1"/>
        <end position="17"/>
    </location>
</feature>
<feature type="chain" id="PRO_0000447408" description="Crinkler effector protein 5">
    <location>
        <begin position="18"/>
        <end position="349"/>
    </location>
</feature>
<feature type="region of interest" description="LQLFLAK domain" evidence="5">
    <location>
        <begin position="18"/>
        <end position="57"/>
    </location>
</feature>
<feature type="region of interest" description="DWL domain" evidence="5">
    <location>
        <begin position="58"/>
        <end position="108"/>
    </location>
</feature>
<feature type="short sequence motif" description="HVLVXXP motif" evidence="5">
    <location>
        <begin position="109"/>
        <end position="115"/>
    </location>
</feature>
<name>CRN5_PHYIN</name>
<comment type="function">
    <text evidence="2">Secreted effector that elicits necrosis in host plants, a characteristic of plant innate immunity.</text>
</comment>
<comment type="subcellular location">
    <subcellularLocation>
        <location evidence="2">Secreted</location>
    </subcellularLocation>
    <subcellularLocation>
        <location evidence="2">Host nucleus</location>
    </subcellularLocation>
</comment>
<comment type="domain">
    <text evidence="2">The CRN proteins have modular architectures that include a signal peptide, a conserved N-terminus, and highly diverse C-terminal domains. The conserved CRN N-terminus harbors a distinct LXLFLAK motif, which is followed by the conserved DWL domain. A highly conserved HVLVXXP motif marks the end of the CRN N-terminal domains and forms a junction where diverse C-terminal domains are fused. The conserved CRN N-terminus mediates the translocation into the plant host cells.</text>
</comment>
<comment type="similarity">
    <text evidence="4">Belongs to the Crinkler effector family.</text>
</comment>
<organism>
    <name type="scientific">Phytophthora infestans</name>
    <name type="common">Potato late blight agent</name>
    <name type="synonym">Botrytis infestans</name>
    <dbReference type="NCBI Taxonomy" id="4787"/>
    <lineage>
        <taxon>Eukaryota</taxon>
        <taxon>Sar</taxon>
        <taxon>Stramenopiles</taxon>
        <taxon>Oomycota</taxon>
        <taxon>Peronosporales</taxon>
        <taxon>Peronosporaceae</taxon>
        <taxon>Phytophthora</taxon>
    </lineage>
</organism>
<sequence length="349" mass="39498">MVKLFCSIVGVAGSPFSVEVNEGKTVDDLKKAIKAENLDDPTLRNVAPKNLQLFLAKKGDAWLRYNEDLDTYLQSEIDTSSYLHMRASWKLSKPTLFGPDVSLGEDVVHVLVVVPGQRLPIAATAIHEPHPARKKRWEELNKILDRNQRAKVNAAGESSTGYSYVSFSDVDRVMRARRYEQPRKVIENEKIDVLYEYLLLLTKAFGEIVNGKEAKRLYFIVPVLVCVCGLFDGEVRILAEETVTGKRVHGDGAFEFVIERGSKRVCIVKAKRDDFQQGLAQAYVGSEVLADLEGLTDLFSIVTNFKEWYFSRCLNDRVERDDATMDMEHDIPTREAVKKIAEKIYSMLS</sequence>
<reference key="1">
    <citation type="journal article" date="2006" name="Fungal Genet. Biol.">
        <title>Computational and comparative analyses of 150 full-length cDNA sequences from the oomycete plant pathogen Phytophthora infestans.</title>
        <authorList>
            <person name="Win J."/>
            <person name="Kanneganti T.D."/>
            <person name="Torto-Alalibo T."/>
            <person name="Kamoun S."/>
        </authorList>
    </citation>
    <scope>NUCLEOTIDE SEQUENCE [MRNA]</scope>
    <source>
        <strain>Isolate 88069</strain>
    </source>
</reference>
<reference key="2">
    <citation type="journal article" date="2010" name="Proc. Natl. Acad. Sci. U.S.A.">
        <title>Ancient class of translocated oomycete effectors targets the host nucleus.</title>
        <authorList>
            <person name="Schornack S."/>
            <person name="van Damme M."/>
            <person name="Bozkurt T.O."/>
            <person name="Cano L.M."/>
            <person name="Smoker M."/>
            <person name="Thines M."/>
            <person name="Gaulin E."/>
            <person name="Kamoun S."/>
            <person name="Huitema E."/>
        </authorList>
    </citation>
    <scope>DOMAIN</scope>
    <scope>SUBCELLULAR LOCATION</scope>
    <scope>FUNCTION</scope>
</reference>
<evidence type="ECO:0000255" key="1"/>
<evidence type="ECO:0000269" key="2">
    <source>
    </source>
</evidence>
<evidence type="ECO:0000303" key="3">
    <source>
    </source>
</evidence>
<evidence type="ECO:0000305" key="4"/>
<evidence type="ECO:0000305" key="5">
    <source>
    </source>
</evidence>
<protein>
    <recommendedName>
        <fullName evidence="3">Crinkler effector protein 5</fullName>
    </recommendedName>
</protein>
<keyword id="KW-1048">Host nucleus</keyword>
<keyword id="KW-0964">Secreted</keyword>
<keyword id="KW-0732">Signal</keyword>
<keyword id="KW-0843">Virulence</keyword>
<gene>
    <name evidence="3" type="primary">CRN5</name>
</gene>